<comment type="subunit">
    <text evidence="1">Homodimer.</text>
</comment>
<comment type="similarity">
    <text evidence="1">Belongs to the UPF0210 family.</text>
</comment>
<evidence type="ECO:0000255" key="1">
    <source>
        <dbReference type="HAMAP-Rule" id="MF_01221"/>
    </source>
</evidence>
<dbReference type="EMBL" id="AL591975">
    <property type="protein sequence ID" value="CAC98613.1"/>
    <property type="molecule type" value="Genomic_DNA"/>
</dbReference>
<dbReference type="PIR" id="AG1141">
    <property type="entry name" value="AG1141"/>
</dbReference>
<dbReference type="RefSeq" id="NP_464062.1">
    <property type="nucleotide sequence ID" value="NC_003210.1"/>
</dbReference>
<dbReference type="RefSeq" id="WP_010989505.1">
    <property type="nucleotide sequence ID" value="NZ_CP149495.1"/>
</dbReference>
<dbReference type="SMR" id="Q8Y9J3"/>
<dbReference type="STRING" id="169963.gene:17593185"/>
<dbReference type="PaxDb" id="169963-lmo0534"/>
<dbReference type="EnsemblBacteria" id="CAC98613">
    <property type="protein sequence ID" value="CAC98613"/>
    <property type="gene ID" value="CAC98613"/>
</dbReference>
<dbReference type="GeneID" id="985301"/>
<dbReference type="KEGG" id="lmo:lmo0534"/>
<dbReference type="PATRIC" id="fig|169963.11.peg.553"/>
<dbReference type="eggNOG" id="COG2848">
    <property type="taxonomic scope" value="Bacteria"/>
</dbReference>
<dbReference type="HOGENOM" id="CLU_048704_0_0_9"/>
<dbReference type="OrthoDB" id="9763001at2"/>
<dbReference type="PhylomeDB" id="Q8Y9J3"/>
<dbReference type="BioCyc" id="LMON169963:LMO0534-MONOMER"/>
<dbReference type="Proteomes" id="UP000000817">
    <property type="component" value="Chromosome"/>
</dbReference>
<dbReference type="CDD" id="cd08025">
    <property type="entry name" value="RNR_PFL_like_DUF711"/>
    <property type="match status" value="1"/>
</dbReference>
<dbReference type="Gene3D" id="3.20.70.20">
    <property type="match status" value="1"/>
</dbReference>
<dbReference type="HAMAP" id="MF_01221">
    <property type="entry name" value="UPF0210"/>
    <property type="match status" value="1"/>
</dbReference>
<dbReference type="InterPro" id="IPR007841">
    <property type="entry name" value="UPF0210"/>
</dbReference>
<dbReference type="NCBIfam" id="NF003700">
    <property type="entry name" value="PRK05313.1"/>
    <property type="match status" value="1"/>
</dbReference>
<dbReference type="PANTHER" id="PTHR37560:SF1">
    <property type="entry name" value="UPF0210 PROTEIN MJ1665"/>
    <property type="match status" value="1"/>
</dbReference>
<dbReference type="PANTHER" id="PTHR37560">
    <property type="entry name" value="UPF0210 PROTEIN SPR0218"/>
    <property type="match status" value="1"/>
</dbReference>
<dbReference type="Pfam" id="PF05167">
    <property type="entry name" value="DUF711"/>
    <property type="match status" value="1"/>
</dbReference>
<dbReference type="SUPFAM" id="SSF51998">
    <property type="entry name" value="PFL-like glycyl radical enzymes"/>
    <property type="match status" value="1"/>
</dbReference>
<reference key="1">
    <citation type="journal article" date="2001" name="Science">
        <title>Comparative genomics of Listeria species.</title>
        <authorList>
            <person name="Glaser P."/>
            <person name="Frangeul L."/>
            <person name="Buchrieser C."/>
            <person name="Rusniok C."/>
            <person name="Amend A."/>
            <person name="Baquero F."/>
            <person name="Berche P."/>
            <person name="Bloecker H."/>
            <person name="Brandt P."/>
            <person name="Chakraborty T."/>
            <person name="Charbit A."/>
            <person name="Chetouani F."/>
            <person name="Couve E."/>
            <person name="de Daruvar A."/>
            <person name="Dehoux P."/>
            <person name="Domann E."/>
            <person name="Dominguez-Bernal G."/>
            <person name="Duchaud E."/>
            <person name="Durant L."/>
            <person name="Dussurget O."/>
            <person name="Entian K.-D."/>
            <person name="Fsihi H."/>
            <person name="Garcia-del Portillo F."/>
            <person name="Garrido P."/>
            <person name="Gautier L."/>
            <person name="Goebel W."/>
            <person name="Gomez-Lopez N."/>
            <person name="Hain T."/>
            <person name="Hauf J."/>
            <person name="Jackson D."/>
            <person name="Jones L.-M."/>
            <person name="Kaerst U."/>
            <person name="Kreft J."/>
            <person name="Kuhn M."/>
            <person name="Kunst F."/>
            <person name="Kurapkat G."/>
            <person name="Madueno E."/>
            <person name="Maitournam A."/>
            <person name="Mata Vicente J."/>
            <person name="Ng E."/>
            <person name="Nedjari H."/>
            <person name="Nordsiek G."/>
            <person name="Novella S."/>
            <person name="de Pablos B."/>
            <person name="Perez-Diaz J.-C."/>
            <person name="Purcell R."/>
            <person name="Remmel B."/>
            <person name="Rose M."/>
            <person name="Schlueter T."/>
            <person name="Simoes N."/>
            <person name="Tierrez A."/>
            <person name="Vazquez-Boland J.-A."/>
            <person name="Voss H."/>
            <person name="Wehland J."/>
            <person name="Cossart P."/>
        </authorList>
    </citation>
    <scope>NUCLEOTIDE SEQUENCE [LARGE SCALE GENOMIC DNA]</scope>
    <source>
        <strain>ATCC BAA-679 / EGD-e</strain>
    </source>
</reference>
<protein>
    <recommendedName>
        <fullName evidence="1">UPF0210 protein lmo0534</fullName>
    </recommendedName>
</protein>
<sequence>METNQILETIRMIEEEKLDIRTITMGISLLDCMDGDGEAARKKIYQKIVTKARNLVAVGEAIESEFGIPIINKRISVTPIAIIAGSSADTDYVEFAKTLDAAAKEVGVNFIGGYSALVQKGYTKGDEILIRSIPQALAQTERVCSSVNVGSTRTGINMDAVRQMGEVIKETADLTADTQGLGCAKLVVFANAVEDNPFMAGAFHGVGEADCVINVGVSGPGVVKRAIEKVKGEPFDIVAETVKQTAFKITRMGQLVGQVASEKLGVPFGIVDLSLAPTPAIGDSVAHILEEMGLEMVGTHGTTAALALLNDAVKKGGVMACGHVGGLSGAFIPVSEDAGMIEAVQQGALNLEKLEAMTAICSVGLDMIAVPGDTTAETLAAMIADEAAIGVINNKTTAVRVIPASGTKVGDMVEFGGLLGTAPVMPVNGKSSVDFIARGGRIPAPIHSFKN</sequence>
<gene>
    <name type="ordered locus">lmo0534</name>
</gene>
<name>Y534_LISMO</name>
<accession>Q8Y9J3</accession>
<proteinExistence type="inferred from homology"/>
<keyword id="KW-1185">Reference proteome</keyword>
<organism>
    <name type="scientific">Listeria monocytogenes serovar 1/2a (strain ATCC BAA-679 / EGD-e)</name>
    <dbReference type="NCBI Taxonomy" id="169963"/>
    <lineage>
        <taxon>Bacteria</taxon>
        <taxon>Bacillati</taxon>
        <taxon>Bacillota</taxon>
        <taxon>Bacilli</taxon>
        <taxon>Bacillales</taxon>
        <taxon>Listeriaceae</taxon>
        <taxon>Listeria</taxon>
    </lineage>
</organism>
<feature type="chain" id="PRO_0000070558" description="UPF0210 protein lmo0534">
    <location>
        <begin position="1"/>
        <end position="451"/>
    </location>
</feature>